<dbReference type="EMBL" id="Z19153">
    <property type="protein sequence ID" value="CAA79548.1"/>
    <property type="molecule type" value="Genomic_DNA"/>
</dbReference>
<dbReference type="PIR" id="S28288">
    <property type="entry name" value="S28288"/>
</dbReference>
<dbReference type="RefSeq" id="NP_499066.1">
    <property type="nucleotide sequence ID" value="NM_066665.8"/>
</dbReference>
<dbReference type="SMR" id="Q03569"/>
<dbReference type="BioGRID" id="41516">
    <property type="interactions" value="5"/>
</dbReference>
<dbReference type="ComplexPortal" id="CPX-4027">
    <property type="entry name" value="gpr-1-gpr-2-lin-5 complex"/>
</dbReference>
<dbReference type="FunCoup" id="Q03569">
    <property type="interactions" value="1405"/>
</dbReference>
<dbReference type="STRING" id="6239.C38C10.4.1"/>
<dbReference type="PaxDb" id="6239-C38C10.4"/>
<dbReference type="PeptideAtlas" id="Q03569"/>
<dbReference type="EnsemblMetazoa" id="C38C10.4.1">
    <property type="protein sequence ID" value="C38C10.4.1"/>
    <property type="gene ID" value="WBGene00001689"/>
</dbReference>
<dbReference type="GeneID" id="176318"/>
<dbReference type="KEGG" id="cel:CELE_C38C10.4"/>
<dbReference type="UCSC" id="C38C10.4">
    <property type="organism name" value="c. elegans"/>
</dbReference>
<dbReference type="AGR" id="WB:WBGene00001689"/>
<dbReference type="CTD" id="176318"/>
<dbReference type="WormBase" id="C38C10.4">
    <property type="protein sequence ID" value="CE00107"/>
    <property type="gene ID" value="WBGene00001689"/>
    <property type="gene designation" value="gpr-2"/>
</dbReference>
<dbReference type="eggNOG" id="ENOG502TGM6">
    <property type="taxonomic scope" value="Eukaryota"/>
</dbReference>
<dbReference type="GeneTree" id="ENSGT00970000196587"/>
<dbReference type="HOGENOM" id="CLU_517044_0_0_1"/>
<dbReference type="InParanoid" id="Q03569"/>
<dbReference type="OrthoDB" id="5839175at2759"/>
<dbReference type="CD-CODE" id="1E117272">
    <property type="entry name" value="Centrosome"/>
</dbReference>
<dbReference type="PRO" id="PR:Q03569"/>
<dbReference type="Proteomes" id="UP000001940">
    <property type="component" value="Chromosome III"/>
</dbReference>
<dbReference type="GO" id="GO:0005818">
    <property type="term" value="C:aster"/>
    <property type="evidence" value="ECO:0000314"/>
    <property type="project" value="WormBase"/>
</dbReference>
<dbReference type="GO" id="GO:0005938">
    <property type="term" value="C:cell cortex"/>
    <property type="evidence" value="ECO:0000314"/>
    <property type="project" value="WormBase"/>
</dbReference>
<dbReference type="GO" id="GO:0072686">
    <property type="term" value="C:mitotic spindle"/>
    <property type="evidence" value="ECO:0000314"/>
    <property type="project" value="ComplexPortal"/>
</dbReference>
<dbReference type="GO" id="GO:0005092">
    <property type="term" value="F:GDP-dissociation inhibitor activity"/>
    <property type="evidence" value="ECO:0000314"/>
    <property type="project" value="WormBase"/>
</dbReference>
<dbReference type="GO" id="GO:0051301">
    <property type="term" value="P:cell division"/>
    <property type="evidence" value="ECO:0007669"/>
    <property type="project" value="UniProtKB-KW"/>
</dbReference>
<dbReference type="GO" id="GO:0040001">
    <property type="term" value="P:establishment of mitotic spindle localization"/>
    <property type="evidence" value="ECO:0000303"/>
    <property type="project" value="ComplexPortal"/>
</dbReference>
<dbReference type="GO" id="GO:0000022">
    <property type="term" value="P:mitotic spindle elongation"/>
    <property type="evidence" value="ECO:0000303"/>
    <property type="project" value="ComplexPortal"/>
</dbReference>
<dbReference type="GO" id="GO:0007097">
    <property type="term" value="P:nuclear migration"/>
    <property type="evidence" value="ECO:0000303"/>
    <property type="project" value="ComplexPortal"/>
</dbReference>
<dbReference type="GO" id="GO:0008277">
    <property type="term" value="P:regulation of G protein-coupled receptor signaling pathway"/>
    <property type="evidence" value="ECO:0000303"/>
    <property type="project" value="ComplexPortal"/>
</dbReference>
<dbReference type="FunFam" id="1.25.40.10:FF:002694">
    <property type="entry name" value="G-protein regulator 1"/>
    <property type="match status" value="1"/>
</dbReference>
<dbReference type="Gene3D" id="1.25.40.10">
    <property type="entry name" value="Tetratricopeptide repeat domain"/>
    <property type="match status" value="1"/>
</dbReference>
<dbReference type="InterPro" id="IPR003109">
    <property type="entry name" value="GoLoco_motif"/>
</dbReference>
<dbReference type="InterPro" id="IPR011990">
    <property type="entry name" value="TPR-like_helical_dom_sf"/>
</dbReference>
<dbReference type="SMART" id="SM00390">
    <property type="entry name" value="GoLoco"/>
    <property type="match status" value="1"/>
</dbReference>
<dbReference type="SUPFAM" id="SSF48452">
    <property type="entry name" value="TPR-like"/>
    <property type="match status" value="2"/>
</dbReference>
<dbReference type="PROSITE" id="PS50877">
    <property type="entry name" value="GOLOCO"/>
    <property type="match status" value="1"/>
</dbReference>
<evidence type="ECO:0000255" key="1">
    <source>
        <dbReference type="PROSITE-ProRule" id="PRU00097"/>
    </source>
</evidence>
<evidence type="ECO:0000256" key="2">
    <source>
        <dbReference type="SAM" id="MobiDB-lite"/>
    </source>
</evidence>
<evidence type="ECO:0000269" key="3">
    <source>
    </source>
</evidence>
<evidence type="ECO:0000269" key="4">
    <source>
    </source>
</evidence>
<evidence type="ECO:0000269" key="5">
    <source>
    </source>
</evidence>
<sequence length="525" mass="60129">MDVSYYDGPKDEVIEAMLKSAVTAMKLGQYEDGKGRLEDTMEFGTSNFQLLGTIYMYYGRVCRHLNHDAKALEFFEHELNMFKLIFNYPEACDSTRRIVQQALKMEKFSKARRFAEDLIDYTSNKKNGEKYIGQARILFASVCLEGCERDVESNQDEKKKLLSICAEQIAAVKLFNENNTEGAVSETKIMLIEAKCLSLDEKYEESRRKYQECIDFAIKTDQFEAVHIAYYDKALYAETYLLFFIIRDLRSALFYATKFGKERDVVKYKSKLSEEMLRNGEFHEAYLYGLEALVSIRKLGLNEHIGDVLLTIAKCLIALGKRRQAAYFIILGSVLTINQSSFKLFYEQIDVAMNQERSETATDQDACLAIDSSPDPTSSNDMINKFVVKLEHATNVETWEMIVNGIIEDQKKPVAIEKKENEEPVDMMDLIFSMSSRMDDQRTELSAARFIPPRPVSSASKKTTKSHRILPGLRANWTKVQSMKFDGHTMNRILKRSKKSKSSLDSTNSIQGDDTRSDDVTMTSK</sequence>
<protein>
    <recommendedName>
        <fullName>G-protein regulator 2</fullName>
    </recommendedName>
</protein>
<accession>Q03569</accession>
<organism>
    <name type="scientific">Caenorhabditis elegans</name>
    <dbReference type="NCBI Taxonomy" id="6239"/>
    <lineage>
        <taxon>Eukaryota</taxon>
        <taxon>Metazoa</taxon>
        <taxon>Ecdysozoa</taxon>
        <taxon>Nematoda</taxon>
        <taxon>Chromadorea</taxon>
        <taxon>Rhabditida</taxon>
        <taxon>Rhabditina</taxon>
        <taxon>Rhabditomorpha</taxon>
        <taxon>Rhabditoidea</taxon>
        <taxon>Rhabditidae</taxon>
        <taxon>Peloderinae</taxon>
        <taxon>Caenorhabditis</taxon>
    </lineage>
</organism>
<feature type="chain" id="PRO_0000087563" description="G-protein regulator 2">
    <location>
        <begin position="1"/>
        <end position="525"/>
    </location>
</feature>
<feature type="domain" description="GoLoco" evidence="1">
    <location>
        <begin position="424"/>
        <end position="445"/>
    </location>
</feature>
<feature type="region of interest" description="Disordered" evidence="2">
    <location>
        <begin position="489"/>
        <end position="525"/>
    </location>
</feature>
<name>GPR2_CAEEL</name>
<proteinExistence type="evidence at protein level"/>
<gene>
    <name type="primary">gpr-2</name>
    <name type="ORF">C38C10.4</name>
</gene>
<keyword id="KW-0131">Cell cycle</keyword>
<keyword id="KW-0132">Cell division</keyword>
<keyword id="KW-0963">Cytoplasm</keyword>
<keyword id="KW-0206">Cytoskeleton</keyword>
<keyword id="KW-0498">Mitosis</keyword>
<keyword id="KW-1185">Reference proteome</keyword>
<comment type="function">
    <text evidence="3 4">In the 1-cell embryo, probably together with gpr-1, controls nuclear rotation and spindle elongation during mitosis (PubMed:14534135). Complex of gpr-1 and gpr-2, in association with lin-5, activates G-protein signaling to affect mitotic spindle force (PubMed:12730122). Polarity determinants (par genes) may regulate lin-5/gpr-1/gpr-2/goa-1 locally to create the asymmetric forces that drive spindle movement (PubMed:12730122).</text>
</comment>
<comment type="subunit">
    <text evidence="3">Interacts with gpr-1; gpr-1 forms a complex with lin-5 and GDP-bound goa-1.</text>
</comment>
<comment type="subcellular location">
    <subcellularLocation>
        <location evidence="3 4">Cytoplasm</location>
        <location evidence="3 4">Cell cortex</location>
    </subcellularLocation>
    <subcellularLocation>
        <location evidence="3">Cytoplasm</location>
        <location evidence="3">Cytoskeleton</location>
        <location evidence="3">Spindle</location>
    </subcellularLocation>
    <text evidence="3 4 5">Located to the spindle and cell cortex when in complex with lin-5 and gpr-1 (PubMed:12730122). During early embryogenesis, cortical localization changes with the cell cycle. In one-cell embryo, uniform cortical localization from prophase to metaphase and posterior enrichment during anaphase. In the 2-cell embryo, uniform cortical localization in AB blastomere and posterior cortical enrichment in P1 blastomere during interphase. In P1, uniform cortical localization from prophase to early anaphase and then posterior cortical enrichment during late anaphase and telophase (PubMed:12730122, PubMed:14534135). Cortical localization and asymmetrical distribution is regulated by the csnk-1-mediated regulation of pkk-1 (PubMed:18694560). Enriched at the contact site between EMS and P2 from prophase to prometaphase (PubMed:14534135).</text>
</comment>
<comment type="disruption phenotype">
    <text evidence="4">Simultaneous RNAi-mediated knockdown of both gpr-1 and gpr-2 causes, in the 1-cell embryo, a decrease in nuclear and spindle movements during prophase, reduced asymmetric spindle elongation during anaphase and mispositioning of nuclei after cell division.</text>
</comment>
<reference key="1">
    <citation type="journal article" date="1994" name="Nature">
        <title>2.2 Mb of contiguous nucleotide sequence from chromosome III of C. elegans.</title>
        <authorList>
            <person name="Wilson R."/>
            <person name="Ainscough R."/>
            <person name="Anderson K."/>
            <person name="Baynes C."/>
            <person name="Berks M."/>
            <person name="Bonfield J."/>
            <person name="Burton J."/>
            <person name="Connell M."/>
            <person name="Copsey T."/>
            <person name="Cooper J."/>
            <person name="Coulson A."/>
            <person name="Craxton M."/>
            <person name="Dear S."/>
            <person name="Du Z."/>
            <person name="Durbin R."/>
            <person name="Favello A."/>
            <person name="Fraser A."/>
            <person name="Fulton L."/>
            <person name="Gardner A."/>
            <person name="Green P."/>
            <person name="Hawkins T."/>
            <person name="Hillier L."/>
            <person name="Jier M."/>
            <person name="Johnston L."/>
            <person name="Jones M."/>
            <person name="Kershaw J."/>
            <person name="Kirsten J."/>
            <person name="Laisster N."/>
            <person name="Latreille P."/>
            <person name="Lightning J."/>
            <person name="Lloyd C."/>
            <person name="Mortimore B."/>
            <person name="O'Callaghan M."/>
            <person name="Parsons J."/>
            <person name="Percy C."/>
            <person name="Rifken L."/>
            <person name="Roopra A."/>
            <person name="Saunders D."/>
            <person name="Shownkeen R."/>
            <person name="Sims M."/>
            <person name="Smaldon N."/>
            <person name="Smith A."/>
            <person name="Smith M."/>
            <person name="Sonnhammer E."/>
            <person name="Staden R."/>
            <person name="Sulston J."/>
            <person name="Thierry-Mieg J."/>
            <person name="Thomas K."/>
            <person name="Vaudin M."/>
            <person name="Vaughan K."/>
            <person name="Waterston R."/>
            <person name="Watson A."/>
            <person name="Weinstock L."/>
            <person name="Wilkinson-Sproat J."/>
            <person name="Wohldman P."/>
        </authorList>
    </citation>
    <scope>NUCLEOTIDE SEQUENCE [LARGE SCALE GENOMIC DNA]</scope>
    <source>
        <strain>Bristol N2</strain>
    </source>
</reference>
<reference key="2">
    <citation type="journal article" date="1998" name="Science">
        <title>Genome sequence of the nematode C. elegans: a platform for investigating biology.</title>
        <authorList>
            <consortium name="The C. elegans sequencing consortium"/>
        </authorList>
    </citation>
    <scope>NUCLEOTIDE SEQUENCE [LARGE SCALE GENOMIC DNA]</scope>
    <source>
        <strain>Bristol N2</strain>
    </source>
</reference>
<reference key="3">
    <citation type="journal article" date="2003" name="Development">
        <title>LET-99 opposes Galpha/GPR signaling to generate asymmetry for spindle positioning in response to PAR and MES-1/SRC-1 signaling.</title>
        <authorList>
            <person name="Tsou M.-F.B."/>
            <person name="Hayashi A."/>
            <person name="Rose L.S."/>
        </authorList>
    </citation>
    <scope>FUNCTION</scope>
    <scope>SUBCELLULAR LOCATION</scope>
    <scope>DISRUPTION PHENOTYPE</scope>
</reference>
<reference key="4">
    <citation type="journal article" date="2003" name="Genes Dev.">
        <title>A complex of LIN-5 and GPR proteins regulates G protein signaling and spindle function in C elegans.</title>
        <authorList>
            <person name="Srinivasan D.G."/>
            <person name="Fisk R.M."/>
            <person name="Xu H."/>
            <person name="van den Heuvel S."/>
        </authorList>
    </citation>
    <scope>FUNCTION</scope>
    <scope>INTERACTION WITH GPR-1</scope>
    <scope>SUBCELLULAR LOCATION</scope>
</reference>
<reference key="5">
    <citation type="journal article" date="2008" name="Dev. Cell">
        <title>A casein kinase 1 and PAR proteins regulate asymmetry of a PIP(2) synthesis enzyme for asymmetric spindle positioning.</title>
        <authorList>
            <person name="Panbianco C."/>
            <person name="Weinkove D."/>
            <person name="Zanin E."/>
            <person name="Jones D."/>
            <person name="Divecha N."/>
            <person name="Gotta M."/>
            <person name="Ahringer J."/>
        </authorList>
    </citation>
    <scope>SUBCELLULAR LOCATION</scope>
</reference>